<organism>
    <name type="scientific">Mus musculus</name>
    <name type="common">Mouse</name>
    <dbReference type="NCBI Taxonomy" id="10090"/>
    <lineage>
        <taxon>Eukaryota</taxon>
        <taxon>Metazoa</taxon>
        <taxon>Chordata</taxon>
        <taxon>Craniata</taxon>
        <taxon>Vertebrata</taxon>
        <taxon>Euteleostomi</taxon>
        <taxon>Mammalia</taxon>
        <taxon>Eutheria</taxon>
        <taxon>Euarchontoglires</taxon>
        <taxon>Glires</taxon>
        <taxon>Rodentia</taxon>
        <taxon>Myomorpha</taxon>
        <taxon>Muroidea</taxon>
        <taxon>Muridae</taxon>
        <taxon>Murinae</taxon>
        <taxon>Mus</taxon>
        <taxon>Mus</taxon>
    </lineage>
</organism>
<proteinExistence type="evidence at protein level"/>
<name>TAAR5_MOUSE</name>
<evidence type="ECO:0000250" key="1">
    <source>
        <dbReference type="UniProtKB" id="O14804"/>
    </source>
</evidence>
<evidence type="ECO:0000250" key="2">
    <source>
        <dbReference type="UniProtKB" id="Q5QD04"/>
    </source>
</evidence>
<evidence type="ECO:0000255" key="3"/>
<evidence type="ECO:0000255" key="4">
    <source>
        <dbReference type="PROSITE-ProRule" id="PRU00521"/>
    </source>
</evidence>
<evidence type="ECO:0000269" key="5">
    <source>
    </source>
</evidence>
<evidence type="ECO:0000269" key="6">
    <source>
    </source>
</evidence>
<evidence type="ECO:0000269" key="7">
    <source>
    </source>
</evidence>
<evidence type="ECO:0000269" key="8">
    <source>
    </source>
</evidence>
<evidence type="ECO:0000269" key="9">
    <source>
    </source>
</evidence>
<evidence type="ECO:0000269" key="10">
    <source>
    </source>
</evidence>
<evidence type="ECO:0000269" key="11">
    <source>
    </source>
</evidence>
<evidence type="ECO:0000269" key="12">
    <source>
    </source>
</evidence>
<evidence type="ECO:0000269" key="13">
    <source>
    </source>
</evidence>
<evidence type="ECO:0000269" key="14">
    <source>
    </source>
</evidence>
<evidence type="ECO:0000269" key="15">
    <source>
    </source>
</evidence>
<evidence type="ECO:0000269" key="16">
    <source>
    </source>
</evidence>
<evidence type="ECO:0000269" key="17">
    <source>
    </source>
</evidence>
<evidence type="ECO:0000303" key="18">
    <source>
    </source>
</evidence>
<evidence type="ECO:0000303" key="19">
    <source>
    </source>
</evidence>
<evidence type="ECO:0000305" key="20">
    <source>
    </source>
</evidence>
<evidence type="ECO:0000305" key="21">
    <source>
    </source>
</evidence>
<evidence type="ECO:0000312" key="22">
    <source>
        <dbReference type="MGI" id="MGI:2685073"/>
    </source>
</evidence>
<protein>
    <recommendedName>
        <fullName evidence="18">Trace amine-associated receptor 5</fullName>
        <shortName>TaR-5</shortName>
        <shortName evidence="18">Trace amine receptor 5</shortName>
        <shortName evidence="18">mTaar5</shortName>
    </recommendedName>
    <alternativeName>
        <fullName evidence="19">Trimethylamine receptor</fullName>
    </alternativeName>
</protein>
<accession>Q5QD14</accession>
<feature type="chain" id="PRO_0000070155" description="Trace amine-associated receptor 5">
    <location>
        <begin position="1"/>
        <end position="337"/>
    </location>
</feature>
<feature type="topological domain" description="Extracellular" evidence="3">
    <location>
        <begin position="1"/>
        <end position="38"/>
    </location>
</feature>
<feature type="transmembrane region" description="Helical; Name=1" evidence="3">
    <location>
        <begin position="39"/>
        <end position="59"/>
    </location>
</feature>
<feature type="topological domain" description="Cytoplasmic" evidence="3">
    <location>
        <begin position="60"/>
        <end position="70"/>
    </location>
</feature>
<feature type="transmembrane region" description="Helical; Name=2" evidence="3">
    <location>
        <begin position="71"/>
        <end position="91"/>
    </location>
</feature>
<feature type="topological domain" description="Extracellular" evidence="3">
    <location>
        <begin position="92"/>
        <end position="109"/>
    </location>
</feature>
<feature type="transmembrane region" description="Helical; Name=3" evidence="3">
    <location>
        <begin position="110"/>
        <end position="130"/>
    </location>
</feature>
<feature type="topological domain" description="Cytoplasmic" evidence="3">
    <location>
        <begin position="131"/>
        <end position="154"/>
    </location>
</feature>
<feature type="transmembrane region" description="Helical; Name=4" evidence="3">
    <location>
        <begin position="155"/>
        <end position="175"/>
    </location>
</feature>
<feature type="topological domain" description="Extracellular" evidence="3">
    <location>
        <begin position="176"/>
        <end position="204"/>
    </location>
</feature>
<feature type="transmembrane region" description="Helical; Name=5" evidence="3">
    <location>
        <begin position="205"/>
        <end position="225"/>
    </location>
</feature>
<feature type="topological domain" description="Cytoplasmic" evidence="3">
    <location>
        <begin position="226"/>
        <end position="253"/>
    </location>
</feature>
<feature type="transmembrane region" description="Helical; Name=6" evidence="3">
    <location>
        <begin position="254"/>
        <end position="274"/>
    </location>
</feature>
<feature type="topological domain" description="Extracellular" evidence="3">
    <location>
        <begin position="275"/>
        <end position="284"/>
    </location>
</feature>
<feature type="transmembrane region" description="Helical; Name=7" evidence="3">
    <location>
        <begin position="285"/>
        <end position="307"/>
    </location>
</feature>
<feature type="topological domain" description="Cytoplasmic" evidence="3">
    <location>
        <begin position="308"/>
        <end position="337"/>
    </location>
</feature>
<feature type="region of interest" description="Extracellular Loop 2 (ECL2)" evidence="2">
    <location>
        <begin position="176"/>
        <end position="189"/>
    </location>
</feature>
<feature type="glycosylation site" description="N-linked (GlcNAc...) asparagine" evidence="3">
    <location>
        <position position="21"/>
    </location>
</feature>
<feature type="disulfide bond" evidence="16">
    <location>
        <begin position="24"/>
        <end position="188"/>
    </location>
</feature>
<feature type="disulfide bond" evidence="4">
    <location>
        <begin position="99"/>
        <end position="192"/>
    </location>
</feature>
<feature type="mutagenesis site" description="Does not affect trace-amine receptor activity." evidence="16">
    <original>C</original>
    <variation>S</variation>
    <location>
        <position position="17"/>
    </location>
</feature>
<feature type="mutagenesis site" description="Decreased trace-amine receptor activity." evidence="16">
    <original>C</original>
    <variation>S</variation>
    <location>
        <position position="24"/>
    </location>
</feature>
<feature type="mutagenesis site" description="Does not affect trace-amine receptor activity." evidence="16">
    <original>C</original>
    <variation>S</variation>
    <location>
        <position position="99"/>
    </location>
</feature>
<feature type="mutagenesis site" description="Abolished signaling via the G(s)-class of G-proteins." evidence="16">
    <original>T</original>
    <variation>A</variation>
    <location>
        <position position="111"/>
    </location>
</feature>
<feature type="mutagenesis site" description="Abolished trace-amine receptor activity." evidence="16">
    <original>D</original>
    <variation>A</variation>
    <location>
        <position position="114"/>
    </location>
</feature>
<feature type="mutagenesis site" description="Abolished signaling via the G(s)-class of G-proteins." evidence="16">
    <original>T</original>
    <variation>A</variation>
    <variation>I</variation>
    <variation>Y</variation>
    <variation>L</variation>
    <location>
        <position position="115"/>
    </location>
</feature>
<feature type="mutagenesis site" description="Does not affect trace-amine receptor activity." evidence="16">
    <original>C</original>
    <variation>A</variation>
    <location>
        <position position="118"/>
    </location>
</feature>
<feature type="mutagenesis site" description="Decreased trace-amine receptor activity." evidence="16">
    <original>C</original>
    <variation>S</variation>
    <location>
        <position position="188"/>
    </location>
</feature>
<feature type="mutagenesis site" description="Decreased activation of GNAL/G(olf) G alpha protein in response to trace amine-binding without affecting activation of G(s) G alpha proteins." evidence="16">
    <original>A</original>
    <variation>I</variation>
    <variation>L</variation>
    <location>
        <position position="257"/>
    </location>
</feature>
<feature type="mutagenesis site" description="Abolished trace-amine receptor activity." evidence="16">
    <original>W</original>
    <variation>A</variation>
    <location>
        <position position="265"/>
    </location>
</feature>
<feature type="mutagenesis site" description="Abolished trace-amine receptor activity." evidence="16">
    <original>Y</original>
    <variation>A</variation>
    <location>
        <position position="295"/>
    </location>
</feature>
<sequence>MRAVLLPGSGEQPTAFCYQVNGSCPRTVHPLAIQVVIYLACAVGVLITVLGNLFVVFAVSYFKVLHTPTNFLLLSLALADMLLGLLVLPLSTVRSVESCWFFGDFLCRLHTYLDTLFCLTSIFHLCFISIDRHCAICDPLLYPSKFTVRTALRYIVAGWGIPAAYTAFFLYTDVVERALSQWLEEMPCVGSCQLLFNKFWGWLNFPAFFVPCLIMISLYLKIFVVATRQAQQIRTLSQSLAGAVKRERKAAKTLGIAVGIYLVCWLPFTVDTLVDSLLNFITPPLVFDIFIWFAYFNSACNPIIYVFSYRWFRKALKLLLSREIFSPRTPTVDLYHD</sequence>
<gene>
    <name evidence="18 22" type="primary">Taar5</name>
    <name evidence="22" type="synonym">Gm227</name>
</gene>
<keyword id="KW-0085">Behavior</keyword>
<keyword id="KW-1003">Cell membrane</keyword>
<keyword id="KW-1015">Disulfide bond</keyword>
<keyword id="KW-0297">G-protein coupled receptor</keyword>
<keyword id="KW-0325">Glycoprotein</keyword>
<keyword id="KW-0472">Membrane</keyword>
<keyword id="KW-0675">Receptor</keyword>
<keyword id="KW-1185">Reference proteome</keyword>
<keyword id="KW-0807">Transducer</keyword>
<keyword id="KW-0812">Transmembrane</keyword>
<keyword id="KW-1133">Transmembrane helix</keyword>
<dbReference type="EMBL" id="AY702329">
    <property type="protein sequence ID" value="AAV70139.1"/>
    <property type="molecule type" value="Genomic_DNA"/>
</dbReference>
<dbReference type="CCDS" id="CCDS23738.1"/>
<dbReference type="RefSeq" id="NP_001009574.1">
    <property type="nucleotide sequence ID" value="NM_001009574.1"/>
</dbReference>
<dbReference type="SMR" id="Q5QD14"/>
<dbReference type="FunCoup" id="Q5QD14">
    <property type="interactions" value="1064"/>
</dbReference>
<dbReference type="STRING" id="10090.ENSMUSP00000090329"/>
<dbReference type="BindingDB" id="Q5QD14"/>
<dbReference type="ChEMBL" id="CHEMBL3784908"/>
<dbReference type="GuidetoPHARMACOLOGY" id="170"/>
<dbReference type="GlyCosmos" id="Q5QD14">
    <property type="glycosylation" value="1 site, No reported glycans"/>
</dbReference>
<dbReference type="GlyGen" id="Q5QD14">
    <property type="glycosylation" value="1 site"/>
</dbReference>
<dbReference type="iPTMnet" id="Q5QD14"/>
<dbReference type="PhosphoSitePlus" id="Q5QD14"/>
<dbReference type="PaxDb" id="10090-ENSMUSP00000090329"/>
<dbReference type="Antibodypedia" id="19709">
    <property type="antibodies" value="211 antibodies from 29 providers"/>
</dbReference>
<dbReference type="DNASU" id="215854"/>
<dbReference type="Ensembl" id="ENSMUST00000092659.4">
    <property type="protein sequence ID" value="ENSMUSP00000090329.3"/>
    <property type="gene ID" value="ENSMUSG00000069706.4"/>
</dbReference>
<dbReference type="GeneID" id="215854"/>
<dbReference type="KEGG" id="mmu:215854"/>
<dbReference type="UCSC" id="uc007eqh.1">
    <property type="organism name" value="mouse"/>
</dbReference>
<dbReference type="AGR" id="MGI:2685073"/>
<dbReference type="CTD" id="9038"/>
<dbReference type="MGI" id="MGI:2685073">
    <property type="gene designation" value="Taar5"/>
</dbReference>
<dbReference type="VEuPathDB" id="HostDB:ENSMUSG00000069706"/>
<dbReference type="eggNOG" id="KOG3656">
    <property type="taxonomic scope" value="Eukaryota"/>
</dbReference>
<dbReference type="GeneTree" id="ENSGT00940000161258"/>
<dbReference type="HOGENOM" id="CLU_009579_11_0_1"/>
<dbReference type="InParanoid" id="Q5QD14"/>
<dbReference type="OMA" id="PTIDLYQ"/>
<dbReference type="OrthoDB" id="5959645at2759"/>
<dbReference type="PhylomeDB" id="Q5QD14"/>
<dbReference type="TreeFam" id="TF343107"/>
<dbReference type="Reactome" id="R-MMU-375280">
    <property type="pathway name" value="Amine ligand-binding receptors"/>
</dbReference>
<dbReference type="Reactome" id="R-MMU-418555">
    <property type="pathway name" value="G alpha (s) signalling events"/>
</dbReference>
<dbReference type="BioGRID-ORCS" id="215854">
    <property type="hits" value="2 hits in 77 CRISPR screens"/>
</dbReference>
<dbReference type="PRO" id="PR:Q5QD14"/>
<dbReference type="Proteomes" id="UP000000589">
    <property type="component" value="Chromosome 10"/>
</dbReference>
<dbReference type="RNAct" id="Q5QD14">
    <property type="molecule type" value="protein"/>
</dbReference>
<dbReference type="Bgee" id="ENSMUSG00000069706">
    <property type="expression patterns" value="Expressed in membranous labyrinth and 6 other cell types or tissues"/>
</dbReference>
<dbReference type="ExpressionAtlas" id="Q5QD14">
    <property type="expression patterns" value="baseline and differential"/>
</dbReference>
<dbReference type="GO" id="GO:0005886">
    <property type="term" value="C:plasma membrane"/>
    <property type="evidence" value="ECO:0000250"/>
    <property type="project" value="UniProtKB"/>
</dbReference>
<dbReference type="GO" id="GO:0001594">
    <property type="term" value="F:trace-amine receptor activity"/>
    <property type="evidence" value="ECO:0000314"/>
    <property type="project" value="UniProtKB"/>
</dbReference>
<dbReference type="GO" id="GO:1990081">
    <property type="term" value="F:trimethylamine receptor activity"/>
    <property type="evidence" value="ECO:0000314"/>
    <property type="project" value="UniProtKB"/>
</dbReference>
<dbReference type="GO" id="GO:0007189">
    <property type="term" value="P:adenylate cyclase-activating G protein-coupled receptor signaling pathway"/>
    <property type="evidence" value="ECO:0000314"/>
    <property type="project" value="UniProtKB"/>
</dbReference>
<dbReference type="GO" id="GO:0007166">
    <property type="term" value="P:cell surface receptor signaling pathway"/>
    <property type="evidence" value="ECO:0007669"/>
    <property type="project" value="InterPro"/>
</dbReference>
<dbReference type="GO" id="GO:0050890">
    <property type="term" value="P:cognition"/>
    <property type="evidence" value="ECO:0000315"/>
    <property type="project" value="UniProtKB"/>
</dbReference>
<dbReference type="GO" id="GO:0007617">
    <property type="term" value="P:mating behavior"/>
    <property type="evidence" value="ECO:0000304"/>
    <property type="project" value="UniProtKB"/>
</dbReference>
<dbReference type="GO" id="GO:0007606">
    <property type="term" value="P:sensory perception of chemical stimulus"/>
    <property type="evidence" value="ECO:0000314"/>
    <property type="project" value="UniProtKB"/>
</dbReference>
<dbReference type="GO" id="GO:0035176">
    <property type="term" value="P:social behavior"/>
    <property type="evidence" value="ECO:0000304"/>
    <property type="project" value="UniProtKB"/>
</dbReference>
<dbReference type="FunFam" id="1.20.1070.10:FF:000030">
    <property type="entry name" value="trace amine-associated receptor 1"/>
    <property type="match status" value="1"/>
</dbReference>
<dbReference type="Gene3D" id="1.20.1070.10">
    <property type="entry name" value="Rhodopsin 7-helix transmembrane proteins"/>
    <property type="match status" value="1"/>
</dbReference>
<dbReference type="InterPro" id="IPR017981">
    <property type="entry name" value="GPCR_2-like_7TM"/>
</dbReference>
<dbReference type="InterPro" id="IPR000276">
    <property type="entry name" value="GPCR_Rhodpsn"/>
</dbReference>
<dbReference type="InterPro" id="IPR017452">
    <property type="entry name" value="GPCR_Rhodpsn_7TM"/>
</dbReference>
<dbReference type="InterPro" id="IPR050569">
    <property type="entry name" value="TAAR"/>
</dbReference>
<dbReference type="InterPro" id="IPR009132">
    <property type="entry name" value="TAAR_fam"/>
</dbReference>
<dbReference type="PANTHER" id="PTHR24249">
    <property type="entry name" value="HISTAMINE RECEPTOR-RELATED G-PROTEIN COUPLED RECEPTOR"/>
    <property type="match status" value="1"/>
</dbReference>
<dbReference type="PANTHER" id="PTHR24249:SF307">
    <property type="entry name" value="TRACE AMINE-ASSOCIATED RECEPTOR 5"/>
    <property type="match status" value="1"/>
</dbReference>
<dbReference type="Pfam" id="PF00001">
    <property type="entry name" value="7tm_1"/>
    <property type="match status" value="1"/>
</dbReference>
<dbReference type="PRINTS" id="PR00237">
    <property type="entry name" value="GPCRRHODOPSN"/>
</dbReference>
<dbReference type="PRINTS" id="PR01830">
    <property type="entry name" value="TRACEAMINER"/>
</dbReference>
<dbReference type="SMART" id="SM01381">
    <property type="entry name" value="7TM_GPCR_Srsx"/>
    <property type="match status" value="1"/>
</dbReference>
<dbReference type="SUPFAM" id="SSF81321">
    <property type="entry name" value="Family A G protein-coupled receptor-like"/>
    <property type="match status" value="1"/>
</dbReference>
<dbReference type="PROSITE" id="PS00237">
    <property type="entry name" value="G_PROTEIN_RECEP_F1_1"/>
    <property type="match status" value="1"/>
</dbReference>
<dbReference type="PROSITE" id="PS50262">
    <property type="entry name" value="G_PROTEIN_RECEP_F1_2"/>
    <property type="match status" value="1"/>
</dbReference>
<reference key="1">
    <citation type="journal article" date="2005" name="Genomics">
        <title>Trace amine-associated receptors form structurally and functionally distinct subfamilies of novel G protein-coupled receptors.</title>
        <authorList>
            <person name="Lindemann L."/>
            <person name="Ebeling M."/>
            <person name="Kratochwil N.A."/>
            <person name="Bunzow J.R."/>
            <person name="Grandy D.K."/>
            <person name="Hoener M.C."/>
        </authorList>
    </citation>
    <scope>NUCLEOTIDE SEQUENCE [GENOMIC DNA]</scope>
    <source>
        <strain>C57BL/6J</strain>
    </source>
</reference>
<reference key="2">
    <citation type="journal article" date="2006" name="Nature">
        <title>A second class of chemosensory receptors in the olfactory epithelium.</title>
        <authorList>
            <person name="Liberles S.D."/>
            <person name="Buck L.B."/>
        </authorList>
    </citation>
    <scope>FUNCTION</scope>
    <scope>TISSUE SPECIFICITY</scope>
</reference>
<reference key="3">
    <citation type="journal article" date="2012" name="ACS Chem. Biol.">
        <title>Agonists for 13 trace amine-associated receptors provide insight into the molecular basis of odor selectivity.</title>
        <authorList>
            <person name="Ferrero D.M."/>
            <person name="Wacker D."/>
            <person name="Roque M.A."/>
            <person name="Baldwin M.W."/>
            <person name="Stevens R.C."/>
            <person name="Liberles S.D."/>
        </authorList>
    </citation>
    <scope>FUNCTION</scope>
</reference>
<reference key="4">
    <citation type="journal article" date="2012" name="Proc. Natl. Acad. Sci. U.S.A.">
        <title>Neurons expressing trace amine-associated receptors project to discrete glomeruli and constitute an olfactory subsystem.</title>
        <authorList>
            <person name="Johnson M.A."/>
            <person name="Tsai L."/>
            <person name="Roy D.S."/>
            <person name="Valenzuela D.H."/>
            <person name="Mosley C."/>
            <person name="Magklara A."/>
            <person name="Lomvardas S."/>
            <person name="Liberles S.D."/>
            <person name="Barnea G."/>
        </authorList>
    </citation>
    <scope>TISSUE SPECIFICITY</scope>
</reference>
<reference key="5">
    <citation type="journal article" date="2013" name="Curr. Biol.">
        <title>Synchronous evolution of an odor biosynthesis pathway and behavioral response.</title>
        <authorList>
            <person name="Li Q."/>
            <person name="Korzan W.J."/>
            <person name="Ferrero D.M."/>
            <person name="Chang R.B."/>
            <person name="Roy D.S."/>
            <person name="Buchi M."/>
            <person name="Lemon J.K."/>
            <person name="Kaur A.W."/>
            <person name="Stowers L."/>
            <person name="Fendt M."/>
            <person name="Liberles S.D."/>
        </authorList>
    </citation>
    <scope>FUNCTION</scope>
</reference>
<reference key="6">
    <citation type="journal article" date="2013" name="Nature">
        <title>Non-redundant coding of aversive odours in the main olfactory pathway.</title>
        <authorList>
            <person name="Dewan A."/>
            <person name="Pacifico R."/>
            <person name="Zhan R."/>
            <person name="Rinberg D."/>
            <person name="Bozza T."/>
        </authorList>
    </citation>
    <scope>DISRUPTION PHENOTYPE</scope>
</reference>
<reference key="7">
    <citation type="journal article" date="2016" name="Proc. Natl. Acad. Sci. U.S.A.">
        <title>Combinatorial effects of odorants on mouse behavior.</title>
        <authorList>
            <person name="Saraiva L.R."/>
            <person name="Kondoh K."/>
            <person name="Ye X."/>
            <person name="Yoon K.H."/>
            <person name="Hernandez M."/>
            <person name="Buck L.B."/>
        </authorList>
    </citation>
    <scope>FUNCTION</scope>
</reference>
<reference key="8">
    <citation type="journal article" date="2018" name="Nat. Commun.">
        <title>Single olfactory receptors set odor detection thresholds.</title>
        <authorList>
            <person name="Dewan A."/>
            <person name="Cichy A."/>
            <person name="Zhang J."/>
            <person name="Miguel K."/>
            <person name="Feinstein P."/>
            <person name="Rinberg D."/>
            <person name="Bozza T."/>
        </authorList>
    </citation>
    <scope>FUNCTION</scope>
    <scope>DISRUPTION PHENOTYPE</scope>
</reference>
<reference key="9">
    <citation type="journal article" date="2020" name="Front. Mol. Neurosci.">
        <title>Trace amine-associated receptor 5 provides olfactory input into limbic brain areas and modulates emotional behaviors and serotonin transmission.</title>
        <authorList>
            <person name="Espinoza S."/>
            <person name="Sukhanov I."/>
            <person name="Efimova E.V."/>
            <person name="Kozlova A."/>
            <person name="Antonova K.A."/>
            <person name="Illiano P."/>
            <person name="Leo D."/>
            <person name="Merkulyeva N."/>
            <person name="Kalinina D."/>
            <person name="Musienko P."/>
            <person name="Rocchi A."/>
            <person name="Mus L."/>
            <person name="Sotnikova T.D."/>
            <person name="Gainetdinov R.R."/>
        </authorList>
    </citation>
    <scope>FUNCTION</scope>
    <scope>DISRUPTION PHENOTYPE</scope>
    <scope>TISSUE SPECIFICITY</scope>
</reference>
<reference key="10">
    <citation type="journal article" date="2021" name="Neuropharmacology">
        <title>Increased dopamine transmission and adult neurogenesis in trace amine-associated receptor 5 (TAAR5) knockout mice.</title>
        <authorList>
            <person name="Efimova E.V."/>
            <person name="Kozlova A.A."/>
            <person name="Razenkova V."/>
            <person name="Katolikova N.V."/>
            <person name="Antonova K.A."/>
            <person name="Sotnikova T.D."/>
            <person name="Merkulyeva N.S."/>
            <person name="Veshchitskii A.S."/>
            <person name="Kalinina D.S."/>
            <person name="Korzhevskii D.E."/>
            <person name="Musienko P.E."/>
            <person name="Kanov E.V."/>
            <person name="Gainetdinov R.R."/>
        </authorList>
    </citation>
    <scope>FUNCTION</scope>
    <scope>DISRUPTION PHENOTYPE</scope>
    <scope>TISSUE SPECIFICITY</scope>
</reference>
<reference key="11">
    <citation type="journal article" date="2021" name="Sci. Rep.">
        <title>Role of the trace amine associated receptor 5 (TAAR5) in the sensorimotor functions.</title>
        <authorList>
            <person name="Kalinina D.S."/>
            <person name="Ptukha M.A."/>
            <person name="Goriainova A.V."/>
            <person name="Merkulyeva N.S."/>
            <person name="Kozlova A.A."/>
            <person name="Murtazina R.Z."/>
            <person name="Shemiakova T.S."/>
            <person name="Kuvarzin S.R."/>
            <person name="Vaganova A.N."/>
            <person name="Volnova A.B."/>
            <person name="Gainetdinov R.R."/>
            <person name="Musienko P.E."/>
        </authorList>
    </citation>
    <scope>TISSUE SPECIFICITY</scope>
    <scope>DISRUPTION PHENOTYPE</scope>
</reference>
<reference key="12">
    <citation type="journal article" date="2022" name="Sci. Rep.">
        <title>Improved cognitive performance in trace amine-associated receptor 5 (TAAR5) knock-out mice.</title>
        <authorList>
            <person name="Maggi S."/>
            <person name="Bon C."/>
            <person name="Gustincich S."/>
            <person name="Tucci V."/>
            <person name="Gainetdinov R.R."/>
            <person name="Espinoza S."/>
        </authorList>
    </citation>
    <scope>FUNCTION</scope>
    <scope>TISSUE SPECIFICITY</scope>
    <scope>DISRUPTION PHENOTYPE</scope>
</reference>
<reference key="13">
    <citation type="journal article" date="2023" name="J. Chem. Inf. Model.">
        <title>Structure-Based Discovery of Mouse Trace Amine-Associated Receptor 5 Antagonists.</title>
        <authorList>
            <person name="Nicoli A."/>
            <person name="Weber V."/>
            <person name="Bon C."/>
            <person name="Steuer A."/>
            <person name="Gustincich S."/>
            <person name="Gainetdinov R.R."/>
            <person name="Lang R."/>
            <person name="Espinoza S."/>
            <person name="Di Pizio A."/>
        </authorList>
    </citation>
    <scope>FUNCTION</scope>
    <scope>ACTIVITY REGULATION</scope>
</reference>
<reference key="14">
    <citation type="journal article" date="2023" name="Nature">
        <title>Structural basis of amine odorant perception by a mammal olfactory receptor.</title>
        <authorList>
            <person name="Guo L."/>
            <person name="Cheng J."/>
            <person name="Lian S."/>
            <person name="Liu Q."/>
            <person name="Lu Y."/>
            <person name="Zheng Y."/>
            <person name="Zhu K."/>
            <person name="Zhang M."/>
            <person name="Kong Y."/>
            <person name="Zhang C."/>
            <person name="Rong N."/>
            <person name="Zhuang Y."/>
            <person name="Fang G."/>
            <person name="Jiang J."/>
            <person name="Zhang T."/>
            <person name="Han X."/>
            <person name="Liu Z."/>
            <person name="Xia M."/>
            <person name="Liu S."/>
            <person name="Zhang L."/>
            <person name="Liberles S.D."/>
            <person name="Yu X."/>
            <person name="Xu Y."/>
            <person name="Yang F."/>
            <person name="Li Q."/>
            <person name="Sun J.P."/>
        </authorList>
    </citation>
    <scope>FUNCTION</scope>
    <scope>DISULFIDE BOND</scope>
    <scope>MUTAGENESIS OF CYS-17; CYS-24; CYS-99; THR-111; ASP-114; THR-115; CYS-118; CYS-188; ALA-257; TRP-265 AND TYR-295</scope>
</reference>
<comment type="function">
    <text evidence="5 6 8 10 11 12 13 15 16 17">Olfactory receptor specific for trimethylamine, a trace amine enriched in the urine of male mice, playing a role in social behavior (PubMed:16878137, PubMed:22545963, PubMed:23177478, PubMed:27208093, PubMed:30038239, PubMed:37225986, PubMed:37847527). Also activated by N-methylpiperidine (PubMed:22545963). Trimethylamine is present at high concentration in the urine of male mice after puberty and acts as an attractant (PubMed:16878137, PubMed:23177478, PubMed:37225986). Trimethylamine-binding causes a conformation change that triggers signaling via G(s)-class of G alpha proteins (GNAL or GNAS) (PubMed:37225986). Also required to provide olfactory input into limbic brain areas to regulate emotional behaviors likely via modulation of the serotonin system (PubMed:32194374, PubMed:33132188, PubMed:36038766).</text>
</comment>
<comment type="activity regulation">
    <text evidence="17">Inhibited by 1-[(5,5- diphenyloxolan-2-yl)methyl]-4-(2-methoxyphenyl)piperazine and N-[(2,2-diphenyl-1,3-dioxolan-4-yl)methyl]-2-(2- methoxyphenoxy)ethan-1-amine small molecules.</text>
</comment>
<comment type="subcellular location">
    <subcellularLocation>
        <location evidence="1">Cell membrane</location>
        <topology evidence="1">Multi-pass membrane protein</topology>
    </subcellularLocation>
</comment>
<comment type="tissue specificity">
    <text evidence="5 7 12 13 14 15">Specifically expressed in neurons of the olfactory epithelium, to discrete glomeruli predominantly localized to a confined bulb region (PubMed:16878137, PubMed:22837392). Present in the dorsal area of the main olfactory epithelium (PubMed:16878137, PubMed:22837392). Also present in the limbic brain areas receiving projection from the olfactory system and involved in the regulation of emotions (PubMed:33132188, PubMed:36038766). Also expressed in some brain regions outside the olfactory epithelium, such as the hippocampus, cerebellum, cortex, raphe nuclei, hypothalamus, and habenula (PubMed:32194374, PubMed:33132188, PubMed:34845253).</text>
</comment>
<comment type="domain">
    <text evidence="2">In addition to the well known disulfide bond common to G-protein coupled receptor 1 family, trace amine-associated receptors (TAARs) contain an unique disulfide bond (Cys-24-Cys-188) connecting the N-terminus to the extracellular Loop 2 (ECL2), which is required for agonist-induced receptor activation.</text>
</comment>
<comment type="disruption phenotype">
    <text evidence="9 11 12 13 14 15">Mice lacking Taar5 show decreased sensitivity to trimethylamine (PubMed:30038239). Mice lacking Taar2, Taar3, Taar4, Taar5, Taar6, Taar7a, Taar7b, Taar7d, Taar7e, Taar7f, Taar8a, Taar8b, Taar8c and Taar9 show no visible phenotype or behavioral deficits (PubMed:23624375). They however show an absence of aversion to low concentrations of amines such as 2-phenylethylamine, isopentylamine, N-methylpiperidine and cadaverine (PubMed:23624375). Mice show less anxiety- and depressive-like behaviors (PubMed:32194374). Mice display an increased number of dopamine neurons and adult neurogenesis (PubMed:33132188). Mice also show a specific motor phenotype characterized by a decrease in muscle force and an improvement in balance and motor coordination (PubMed:34845253). Mice also show improved cognitive performance (PubMed:36038766).</text>
</comment>
<comment type="miscellaneous">
    <text evidence="20 21">Trimethylamine is a bacterial metabolite found in some animal odors, and is a repulsive odor associated with bad breath and spoiled food for most organisms, except for M.musculus, where it acts as an attractant (PubMed:16878137, PubMed:23177478).</text>
</comment>
<comment type="similarity">
    <text evidence="4">Belongs to the G-protein coupled receptor 1 family.</text>
</comment>